<sequence length="570" mass="64973">MDFNPVPPPRETLRAYLSKKGHVVKNWKLRLFVLKPGSSYMEYFVDETKEQQHLPQGRVPLYGTRVMEYVYNSNNNPREFCLSVETENKNWIISTGSKAQQLEWIEAIKHAIESAVETDEIKLQKHKSIEKQLQLDGKNKNKIPVLKLLLLGTGESGKSTVVKQMKILHHKGFSKEEEEFYRNLIYINLLDGMALLIHVIKENNIEIPQETLSAIKNYSSWYRVYIEKRNKNGIRNNPIGSMIPISILNNNKDNNNSNSSSLKNNSGGSSSSELDKKMTHLSLDGSTCINSNSASPNGPSSSTTTSTINTHNRSNSDGSSNNIFNVQDFGIPPIITNYISTIWSDPVVQSEVMLQAQKYHINESTQYYLNEIKRIGKPTYQPVNLDILKSRATTNGVVETDFNVNGEVIFRIVDVAGQRGERKKWINFFDDVTAIVFVAAINEYDQKLVEDNCTNRLHESLNLFDSICNDSTFPKTSIILFLNKIDLFREKLKRTSINICFPDYNGDQSYEKSSNYIKNNFLSKKKGGNGINSQNFIYFHFTCATDTKSFETVFNSVRDIIISKTLEFYC</sequence>
<name>GPA3_DICDI</name>
<feature type="chain" id="PRO_0000312406" description="Guanine nucleotide-binding protein alpha-3 subunit">
    <location>
        <begin position="1"/>
        <end position="570"/>
    </location>
</feature>
<feature type="domain" description="PH" evidence="2">
    <location>
        <begin position="10"/>
        <end position="113"/>
    </location>
</feature>
<feature type="domain" description="G-alpha" evidence="3">
    <location>
        <begin position="144"/>
        <end position="570"/>
    </location>
</feature>
<feature type="region of interest" description="G1 motif" evidence="3">
    <location>
        <begin position="147"/>
        <end position="160"/>
    </location>
</feature>
<feature type="region of interest" description="Disordered" evidence="4">
    <location>
        <begin position="254"/>
        <end position="321"/>
    </location>
</feature>
<feature type="region of interest" description="G2 motif" evidence="3">
    <location>
        <begin position="386"/>
        <end position="394"/>
    </location>
</feature>
<feature type="region of interest" description="G3 motif" evidence="3">
    <location>
        <begin position="410"/>
        <end position="419"/>
    </location>
</feature>
<feature type="region of interest" description="G4 motif" evidence="3">
    <location>
        <begin position="479"/>
        <end position="486"/>
    </location>
</feature>
<feature type="region of interest" description="G5 motif" evidence="3">
    <location>
        <begin position="542"/>
        <end position="547"/>
    </location>
</feature>
<feature type="compositionally biased region" description="Low complexity" evidence="4">
    <location>
        <begin position="254"/>
        <end position="272"/>
    </location>
</feature>
<feature type="compositionally biased region" description="Low complexity" evidence="4">
    <location>
        <begin position="290"/>
        <end position="316"/>
    </location>
</feature>
<feature type="binding site" evidence="1">
    <location>
        <begin position="152"/>
        <end position="159"/>
    </location>
    <ligand>
        <name>GTP</name>
        <dbReference type="ChEBI" id="CHEBI:37565"/>
    </ligand>
</feature>
<feature type="binding site" evidence="1">
    <location>
        <position position="159"/>
    </location>
    <ligand>
        <name>Mg(2+)</name>
        <dbReference type="ChEBI" id="CHEBI:18420"/>
    </ligand>
</feature>
<feature type="binding site" evidence="1">
    <location>
        <begin position="388"/>
        <end position="394"/>
    </location>
    <ligand>
        <name>GTP</name>
        <dbReference type="ChEBI" id="CHEBI:37565"/>
    </ligand>
</feature>
<feature type="binding site" evidence="1">
    <location>
        <position position="394"/>
    </location>
    <ligand>
        <name>Mg(2+)</name>
        <dbReference type="ChEBI" id="CHEBI:18420"/>
    </ligand>
</feature>
<feature type="binding site" evidence="1">
    <location>
        <begin position="414"/>
        <end position="418"/>
    </location>
    <ligand>
        <name>GTP</name>
        <dbReference type="ChEBI" id="CHEBI:37565"/>
    </ligand>
</feature>
<feature type="binding site" evidence="1">
    <location>
        <begin position="483"/>
        <end position="486"/>
    </location>
    <ligand>
        <name>GTP</name>
        <dbReference type="ChEBI" id="CHEBI:37565"/>
    </ligand>
</feature>
<feature type="binding site" evidence="1">
    <location>
        <position position="544"/>
    </location>
    <ligand>
        <name>GTP</name>
        <dbReference type="ChEBI" id="CHEBI:37565"/>
    </ligand>
</feature>
<accession>Q54KV6</accession>
<accession>Q94470</accession>
<comment type="function">
    <text>Guanine nucleotide-binding proteins (G proteins) are involved as modulators or transducers in various transmembrane signaling systems. G alpha-3 plays a role in development. G alpha-3 mutants fail to aggregate.</text>
</comment>
<comment type="subunit">
    <text>G proteins are composed of 3 units; alpha, beta and gamma. The alpha chain contains the guanine nucleotide binding site.</text>
</comment>
<comment type="similarity">
    <text evidence="5">Belongs to the G-alpha family.</text>
</comment>
<organism>
    <name type="scientific">Dictyostelium discoideum</name>
    <name type="common">Social amoeba</name>
    <dbReference type="NCBI Taxonomy" id="44689"/>
    <lineage>
        <taxon>Eukaryota</taxon>
        <taxon>Amoebozoa</taxon>
        <taxon>Evosea</taxon>
        <taxon>Eumycetozoa</taxon>
        <taxon>Dictyostelia</taxon>
        <taxon>Dictyosteliales</taxon>
        <taxon>Dictyosteliaceae</taxon>
        <taxon>Dictyostelium</taxon>
    </lineage>
</organism>
<gene>
    <name type="primary">gpaC</name>
    <name type="synonym">Ga3</name>
    <name type="ORF">DDB_G0287031</name>
</gene>
<keyword id="KW-0342">GTP-binding</keyword>
<keyword id="KW-0460">Magnesium</keyword>
<keyword id="KW-0479">Metal-binding</keyword>
<keyword id="KW-0547">Nucleotide-binding</keyword>
<keyword id="KW-1185">Reference proteome</keyword>
<keyword id="KW-0807">Transducer</keyword>
<reference key="1">
    <citation type="journal article" date="2005" name="Nature">
        <title>The genome of the social amoeba Dictyostelium discoideum.</title>
        <authorList>
            <person name="Eichinger L."/>
            <person name="Pachebat J.A."/>
            <person name="Gloeckner G."/>
            <person name="Rajandream M.A."/>
            <person name="Sucgang R."/>
            <person name="Berriman M."/>
            <person name="Song J."/>
            <person name="Olsen R."/>
            <person name="Szafranski K."/>
            <person name="Xu Q."/>
            <person name="Tunggal B."/>
            <person name="Kummerfeld S."/>
            <person name="Madera M."/>
            <person name="Konfortov B.A."/>
            <person name="Rivero F."/>
            <person name="Bankier A.T."/>
            <person name="Lehmann R."/>
            <person name="Hamlin N."/>
            <person name="Davies R."/>
            <person name="Gaudet P."/>
            <person name="Fey P."/>
            <person name="Pilcher K."/>
            <person name="Chen G."/>
            <person name="Saunders D."/>
            <person name="Sodergren E.J."/>
            <person name="Davis P."/>
            <person name="Kerhornou A."/>
            <person name="Nie X."/>
            <person name="Hall N."/>
            <person name="Anjard C."/>
            <person name="Hemphill L."/>
            <person name="Bason N."/>
            <person name="Farbrother P."/>
            <person name="Desany B."/>
            <person name="Just E."/>
            <person name="Morio T."/>
            <person name="Rost R."/>
            <person name="Churcher C.M."/>
            <person name="Cooper J."/>
            <person name="Haydock S."/>
            <person name="van Driessche N."/>
            <person name="Cronin A."/>
            <person name="Goodhead I."/>
            <person name="Muzny D.M."/>
            <person name="Mourier T."/>
            <person name="Pain A."/>
            <person name="Lu M."/>
            <person name="Harper D."/>
            <person name="Lindsay R."/>
            <person name="Hauser H."/>
            <person name="James K.D."/>
            <person name="Quiles M."/>
            <person name="Madan Babu M."/>
            <person name="Saito T."/>
            <person name="Buchrieser C."/>
            <person name="Wardroper A."/>
            <person name="Felder M."/>
            <person name="Thangavelu M."/>
            <person name="Johnson D."/>
            <person name="Knights A."/>
            <person name="Loulseged H."/>
            <person name="Mungall K.L."/>
            <person name="Oliver K."/>
            <person name="Price C."/>
            <person name="Quail M.A."/>
            <person name="Urushihara H."/>
            <person name="Hernandez J."/>
            <person name="Rabbinowitsch E."/>
            <person name="Steffen D."/>
            <person name="Sanders M."/>
            <person name="Ma J."/>
            <person name="Kohara Y."/>
            <person name="Sharp S."/>
            <person name="Simmonds M.N."/>
            <person name="Spiegler S."/>
            <person name="Tivey A."/>
            <person name="Sugano S."/>
            <person name="White B."/>
            <person name="Walker D."/>
            <person name="Woodward J.R."/>
            <person name="Winckler T."/>
            <person name="Tanaka Y."/>
            <person name="Shaulsky G."/>
            <person name="Schleicher M."/>
            <person name="Weinstock G.M."/>
            <person name="Rosenthal A."/>
            <person name="Cox E.C."/>
            <person name="Chisholm R.L."/>
            <person name="Gibbs R.A."/>
            <person name="Loomis W.F."/>
            <person name="Platzer M."/>
            <person name="Kay R.R."/>
            <person name="Williams J.G."/>
            <person name="Dear P.H."/>
            <person name="Noegel A.A."/>
            <person name="Barrell B.G."/>
            <person name="Kuspa A."/>
        </authorList>
    </citation>
    <scope>NUCLEOTIDE SEQUENCE [LARGE SCALE GENOMIC DNA]</scope>
    <source>
        <strain>AX4</strain>
    </source>
</reference>
<reference key="2">
    <citation type="journal article" date="1997" name="Gene">
        <title>Molecular characterization of a Dictyostelium G-protein alpha-subunit required for development.</title>
        <authorList>
            <person name="Brandon M.A."/>
            <person name="Voglmaier S."/>
            <person name="Siddiqi A.A."/>
        </authorList>
    </citation>
    <scope>NUCLEOTIDE SEQUENCE [GENOMIC DNA] OF 67-570</scope>
</reference>
<evidence type="ECO:0000250" key="1"/>
<evidence type="ECO:0000255" key="2">
    <source>
        <dbReference type="PROSITE-ProRule" id="PRU00145"/>
    </source>
</evidence>
<evidence type="ECO:0000255" key="3">
    <source>
        <dbReference type="PROSITE-ProRule" id="PRU01230"/>
    </source>
</evidence>
<evidence type="ECO:0000256" key="4">
    <source>
        <dbReference type="SAM" id="MobiDB-lite"/>
    </source>
</evidence>
<evidence type="ECO:0000305" key="5"/>
<protein>
    <recommendedName>
        <fullName>Guanine nucleotide-binding protein alpha-3 subunit</fullName>
        <shortName>G alpha-3</shortName>
    </recommendedName>
</protein>
<proteinExistence type="inferred from homology"/>
<dbReference type="EMBL" id="AAFI02000096">
    <property type="protein sequence ID" value="EAL63880.1"/>
    <property type="molecule type" value="Genomic_DNA"/>
</dbReference>
<dbReference type="EMBL" id="U64319">
    <property type="protein sequence ID" value="AAB88395.1"/>
    <property type="molecule type" value="Genomic_DNA"/>
</dbReference>
<dbReference type="RefSeq" id="XP_637414.1">
    <property type="nucleotide sequence ID" value="XM_632322.1"/>
</dbReference>
<dbReference type="SMR" id="Q54KV6"/>
<dbReference type="FunCoup" id="Q54KV6">
    <property type="interactions" value="7"/>
</dbReference>
<dbReference type="STRING" id="44689.Q54KV6"/>
<dbReference type="PaxDb" id="44689-DDB0216258"/>
<dbReference type="EnsemblProtists" id="EAL63880">
    <property type="protein sequence ID" value="EAL63880"/>
    <property type="gene ID" value="DDB_G0287031"/>
</dbReference>
<dbReference type="GeneID" id="8625946"/>
<dbReference type="KEGG" id="ddi:DDB_G0287031"/>
<dbReference type="dictyBase" id="DDB_G0287031">
    <property type="gene designation" value="gpaC"/>
</dbReference>
<dbReference type="VEuPathDB" id="AmoebaDB:DDB_G0287031"/>
<dbReference type="eggNOG" id="KOG0082">
    <property type="taxonomic scope" value="Eukaryota"/>
</dbReference>
<dbReference type="HOGENOM" id="CLU_014184_2_1_1"/>
<dbReference type="InParanoid" id="Q54KV6"/>
<dbReference type="OMA" id="WINFFDD"/>
<dbReference type="PhylomeDB" id="Q54KV6"/>
<dbReference type="Reactome" id="R-DDI-112043">
    <property type="pathway name" value="PLC beta mediated events"/>
</dbReference>
<dbReference type="Reactome" id="R-DDI-170660">
    <property type="pathway name" value="Adenylate cyclase activating pathway"/>
</dbReference>
<dbReference type="Reactome" id="R-DDI-170670">
    <property type="pathway name" value="Adenylate cyclase inhibitory pathway"/>
</dbReference>
<dbReference type="Reactome" id="R-DDI-202040">
    <property type="pathway name" value="G-protein activation"/>
</dbReference>
<dbReference type="Reactome" id="R-DDI-399997">
    <property type="pathway name" value="Acetylcholine regulates insulin secretion"/>
</dbReference>
<dbReference type="Reactome" id="R-DDI-416476">
    <property type="pathway name" value="G alpha (q) signalling events"/>
</dbReference>
<dbReference type="Reactome" id="R-DDI-416482">
    <property type="pathway name" value="G alpha (12/13) signalling events"/>
</dbReference>
<dbReference type="Reactome" id="R-DDI-418592">
    <property type="pathway name" value="ADP signalling through P2Y purinoceptor 1"/>
</dbReference>
<dbReference type="Reactome" id="R-DDI-434316">
    <property type="pathway name" value="Fatty Acids bound to GPR40 (FFAR1) regulate insulin secretion"/>
</dbReference>
<dbReference type="Reactome" id="R-DDI-9013148">
    <property type="pathway name" value="CDC42 GTPase cycle"/>
</dbReference>
<dbReference type="Reactome" id="R-DDI-9013149">
    <property type="pathway name" value="RAC1 GTPase cycle"/>
</dbReference>
<dbReference type="Reactome" id="R-DDI-9856530">
    <property type="pathway name" value="High laminar flow shear stress activates signaling by PIEZO1 and PECAM1:CDH5:KDR in endothelial cells"/>
</dbReference>
<dbReference type="PRO" id="PR:Q54KV6"/>
<dbReference type="Proteomes" id="UP000002195">
    <property type="component" value="Chromosome 4"/>
</dbReference>
<dbReference type="GO" id="GO:0005737">
    <property type="term" value="C:cytoplasm"/>
    <property type="evidence" value="ECO:0000318"/>
    <property type="project" value="GO_Central"/>
</dbReference>
<dbReference type="GO" id="GO:0005834">
    <property type="term" value="C:heterotrimeric G-protein complex"/>
    <property type="evidence" value="ECO:0000318"/>
    <property type="project" value="GO_Central"/>
</dbReference>
<dbReference type="GO" id="GO:0008603">
    <property type="term" value="F:cAMP-dependent protein kinase regulator activity"/>
    <property type="evidence" value="ECO:0000315"/>
    <property type="project" value="dictyBase"/>
</dbReference>
<dbReference type="GO" id="GO:0001664">
    <property type="term" value="F:G protein-coupled receptor binding"/>
    <property type="evidence" value="ECO:0000318"/>
    <property type="project" value="GO_Central"/>
</dbReference>
<dbReference type="GO" id="GO:0031683">
    <property type="term" value="F:G-protein beta/gamma-subunit complex binding"/>
    <property type="evidence" value="ECO:0000318"/>
    <property type="project" value="GO_Central"/>
</dbReference>
<dbReference type="GO" id="GO:0005525">
    <property type="term" value="F:GTP binding"/>
    <property type="evidence" value="ECO:0007669"/>
    <property type="project" value="UniProtKB-KW"/>
</dbReference>
<dbReference type="GO" id="GO:0003924">
    <property type="term" value="F:GTPase activity"/>
    <property type="evidence" value="ECO:0000318"/>
    <property type="project" value="GO_Central"/>
</dbReference>
<dbReference type="GO" id="GO:0046872">
    <property type="term" value="F:metal ion binding"/>
    <property type="evidence" value="ECO:0007669"/>
    <property type="project" value="UniProtKB-KW"/>
</dbReference>
<dbReference type="GO" id="GO:0007188">
    <property type="term" value="P:adenylate cyclase-modulating G protein-coupled receptor signaling pathway"/>
    <property type="evidence" value="ECO:0000318"/>
    <property type="project" value="GO_Central"/>
</dbReference>
<dbReference type="GO" id="GO:0060176">
    <property type="term" value="P:regulation of aggregation involved in sorocarp development"/>
    <property type="evidence" value="ECO:0000315"/>
    <property type="project" value="dictyBase"/>
</dbReference>
<dbReference type="GO" id="GO:0010468">
    <property type="term" value="P:regulation of gene expression"/>
    <property type="evidence" value="ECO:0000315"/>
    <property type="project" value="dictyBase"/>
</dbReference>
<dbReference type="CDD" id="cd00066">
    <property type="entry name" value="G-alpha"/>
    <property type="match status" value="1"/>
</dbReference>
<dbReference type="FunFam" id="1.10.400.10:FF:000066">
    <property type="entry name" value="G-protein subunit alpha 3"/>
    <property type="match status" value="1"/>
</dbReference>
<dbReference type="FunFam" id="3.40.50.300:FF:000563">
    <property type="entry name" value="Guanine nucleotide-binding protein alpha subunit"/>
    <property type="match status" value="1"/>
</dbReference>
<dbReference type="FunFam" id="3.40.50.300:FF:000692">
    <property type="entry name" value="Guanine nucleotide-binding protein subunit alpha"/>
    <property type="match status" value="1"/>
</dbReference>
<dbReference type="Gene3D" id="1.10.400.10">
    <property type="entry name" value="GI Alpha 1, domain 2-like"/>
    <property type="match status" value="2"/>
</dbReference>
<dbReference type="Gene3D" id="3.40.50.300">
    <property type="entry name" value="P-loop containing nucleotide triphosphate hydrolases"/>
    <property type="match status" value="2"/>
</dbReference>
<dbReference type="Gene3D" id="2.30.29.30">
    <property type="entry name" value="Pleckstrin-homology domain (PH domain)/Phosphotyrosine-binding domain (PTB)"/>
    <property type="match status" value="1"/>
</dbReference>
<dbReference type="InterPro" id="IPR001019">
    <property type="entry name" value="Gprotein_alpha_su"/>
</dbReference>
<dbReference type="InterPro" id="IPR011025">
    <property type="entry name" value="GproteinA_insert"/>
</dbReference>
<dbReference type="InterPro" id="IPR027417">
    <property type="entry name" value="P-loop_NTPase"/>
</dbReference>
<dbReference type="InterPro" id="IPR011993">
    <property type="entry name" value="PH-like_dom_sf"/>
</dbReference>
<dbReference type="InterPro" id="IPR001849">
    <property type="entry name" value="PH_domain"/>
</dbReference>
<dbReference type="PANTHER" id="PTHR10218">
    <property type="entry name" value="GTP-BINDING PROTEIN ALPHA SUBUNIT"/>
    <property type="match status" value="1"/>
</dbReference>
<dbReference type="PANTHER" id="PTHR10218:SF336">
    <property type="entry name" value="GUANINE NUCLEOTIDE-BINDING PROTEIN ALPHA-3 SUBUNIT"/>
    <property type="match status" value="1"/>
</dbReference>
<dbReference type="Pfam" id="PF00503">
    <property type="entry name" value="G-alpha"/>
    <property type="match status" value="1"/>
</dbReference>
<dbReference type="Pfam" id="PF00169">
    <property type="entry name" value="PH"/>
    <property type="match status" value="1"/>
</dbReference>
<dbReference type="PRINTS" id="PR00318">
    <property type="entry name" value="GPROTEINA"/>
</dbReference>
<dbReference type="SMART" id="SM00275">
    <property type="entry name" value="G_alpha"/>
    <property type="match status" value="1"/>
</dbReference>
<dbReference type="SMART" id="SM00233">
    <property type="entry name" value="PH"/>
    <property type="match status" value="1"/>
</dbReference>
<dbReference type="SUPFAM" id="SSF52540">
    <property type="entry name" value="P-loop containing nucleoside triphosphate hydrolases"/>
    <property type="match status" value="1"/>
</dbReference>
<dbReference type="SUPFAM" id="SSF50729">
    <property type="entry name" value="PH domain-like"/>
    <property type="match status" value="1"/>
</dbReference>
<dbReference type="SUPFAM" id="SSF47895">
    <property type="entry name" value="Transducin (alpha subunit), insertion domain"/>
    <property type="match status" value="1"/>
</dbReference>
<dbReference type="PROSITE" id="PS51882">
    <property type="entry name" value="G_ALPHA"/>
    <property type="match status" value="1"/>
</dbReference>
<dbReference type="PROSITE" id="PS50003">
    <property type="entry name" value="PH_DOMAIN"/>
    <property type="match status" value="1"/>
</dbReference>